<dbReference type="EMBL" id="CP000668">
    <property type="protein sequence ID" value="ABP41521.1"/>
    <property type="molecule type" value="Genomic_DNA"/>
</dbReference>
<dbReference type="RefSeq" id="WP_002209248.1">
    <property type="nucleotide sequence ID" value="NZ_CP009715.1"/>
</dbReference>
<dbReference type="SMR" id="A4TQF9"/>
<dbReference type="GeneID" id="57974141"/>
<dbReference type="KEGG" id="ypp:YPDSF_3163"/>
<dbReference type="PATRIC" id="fig|386656.14.peg.1187"/>
<dbReference type="GO" id="GO:0005524">
    <property type="term" value="F:ATP binding"/>
    <property type="evidence" value="ECO:0007669"/>
    <property type="project" value="UniProtKB-UniRule"/>
</dbReference>
<dbReference type="GO" id="GO:0140662">
    <property type="term" value="F:ATP-dependent protein folding chaperone"/>
    <property type="evidence" value="ECO:0007669"/>
    <property type="project" value="InterPro"/>
</dbReference>
<dbReference type="GO" id="GO:0051082">
    <property type="term" value="F:unfolded protein binding"/>
    <property type="evidence" value="ECO:0007669"/>
    <property type="project" value="InterPro"/>
</dbReference>
<dbReference type="CDD" id="cd10234">
    <property type="entry name" value="ASKHA_NBD_HSP70_DnaK-like"/>
    <property type="match status" value="1"/>
</dbReference>
<dbReference type="FunFam" id="2.60.34.10:FF:000014">
    <property type="entry name" value="Chaperone protein DnaK HSP70"/>
    <property type="match status" value="1"/>
</dbReference>
<dbReference type="FunFam" id="3.30.30.30:FF:000003">
    <property type="entry name" value="Heat shock protein 9"/>
    <property type="match status" value="1"/>
</dbReference>
<dbReference type="FunFam" id="1.20.1270.10:FF:000001">
    <property type="entry name" value="Molecular chaperone DnaK"/>
    <property type="match status" value="1"/>
</dbReference>
<dbReference type="FunFam" id="3.30.420.40:FF:000004">
    <property type="entry name" value="Molecular chaperone DnaK"/>
    <property type="match status" value="1"/>
</dbReference>
<dbReference type="FunFam" id="3.90.640.10:FF:000003">
    <property type="entry name" value="Molecular chaperone DnaK"/>
    <property type="match status" value="1"/>
</dbReference>
<dbReference type="Gene3D" id="1.20.1270.10">
    <property type="match status" value="1"/>
</dbReference>
<dbReference type="Gene3D" id="3.30.420.40">
    <property type="match status" value="2"/>
</dbReference>
<dbReference type="Gene3D" id="3.90.640.10">
    <property type="entry name" value="Actin, Chain A, domain 4"/>
    <property type="match status" value="1"/>
</dbReference>
<dbReference type="Gene3D" id="2.60.34.10">
    <property type="entry name" value="Substrate Binding Domain Of DNAk, Chain A, domain 1"/>
    <property type="match status" value="1"/>
</dbReference>
<dbReference type="HAMAP" id="MF_00332">
    <property type="entry name" value="DnaK"/>
    <property type="match status" value="1"/>
</dbReference>
<dbReference type="InterPro" id="IPR043129">
    <property type="entry name" value="ATPase_NBD"/>
</dbReference>
<dbReference type="InterPro" id="IPR012725">
    <property type="entry name" value="Chaperone_DnaK"/>
</dbReference>
<dbReference type="InterPro" id="IPR018181">
    <property type="entry name" value="Heat_shock_70_CS"/>
</dbReference>
<dbReference type="InterPro" id="IPR029048">
    <property type="entry name" value="HSP70_C_sf"/>
</dbReference>
<dbReference type="InterPro" id="IPR029047">
    <property type="entry name" value="HSP70_peptide-bd_sf"/>
</dbReference>
<dbReference type="InterPro" id="IPR013126">
    <property type="entry name" value="Hsp_70_fam"/>
</dbReference>
<dbReference type="NCBIfam" id="NF001413">
    <property type="entry name" value="PRK00290.1"/>
    <property type="match status" value="1"/>
</dbReference>
<dbReference type="NCBIfam" id="NF003520">
    <property type="entry name" value="PRK05183.1"/>
    <property type="match status" value="1"/>
</dbReference>
<dbReference type="NCBIfam" id="TIGR02350">
    <property type="entry name" value="prok_dnaK"/>
    <property type="match status" value="1"/>
</dbReference>
<dbReference type="PANTHER" id="PTHR19375">
    <property type="entry name" value="HEAT SHOCK PROTEIN 70KDA"/>
    <property type="match status" value="1"/>
</dbReference>
<dbReference type="Pfam" id="PF00012">
    <property type="entry name" value="HSP70"/>
    <property type="match status" value="1"/>
</dbReference>
<dbReference type="PRINTS" id="PR00301">
    <property type="entry name" value="HEATSHOCK70"/>
</dbReference>
<dbReference type="SUPFAM" id="SSF53067">
    <property type="entry name" value="Actin-like ATPase domain"/>
    <property type="match status" value="2"/>
</dbReference>
<dbReference type="SUPFAM" id="SSF100934">
    <property type="entry name" value="Heat shock protein 70kD (HSP70), C-terminal subdomain"/>
    <property type="match status" value="1"/>
</dbReference>
<dbReference type="SUPFAM" id="SSF100920">
    <property type="entry name" value="Heat shock protein 70kD (HSP70), peptide-binding domain"/>
    <property type="match status" value="1"/>
</dbReference>
<dbReference type="PROSITE" id="PS00297">
    <property type="entry name" value="HSP70_1"/>
    <property type="match status" value="1"/>
</dbReference>
<dbReference type="PROSITE" id="PS00329">
    <property type="entry name" value="HSP70_2"/>
    <property type="match status" value="1"/>
</dbReference>
<dbReference type="PROSITE" id="PS01036">
    <property type="entry name" value="HSP70_3"/>
    <property type="match status" value="1"/>
</dbReference>
<feature type="chain" id="PRO_1000059703" description="Chaperone protein DnaK">
    <location>
        <begin position="1"/>
        <end position="636"/>
    </location>
</feature>
<feature type="region of interest" description="Disordered" evidence="2">
    <location>
        <begin position="603"/>
        <end position="636"/>
    </location>
</feature>
<feature type="modified residue" description="Phosphothreonine; by autocatalysis" evidence="1">
    <location>
        <position position="199"/>
    </location>
</feature>
<reference key="1">
    <citation type="submission" date="2007-02" db="EMBL/GenBank/DDBJ databases">
        <title>Complete sequence of chromosome of Yersinia pestis Pestoides F.</title>
        <authorList>
            <consortium name="US DOE Joint Genome Institute"/>
            <person name="Copeland A."/>
            <person name="Lucas S."/>
            <person name="Lapidus A."/>
            <person name="Barry K."/>
            <person name="Detter J.C."/>
            <person name="Glavina del Rio T."/>
            <person name="Hammon N."/>
            <person name="Israni S."/>
            <person name="Dalin E."/>
            <person name="Tice H."/>
            <person name="Pitluck S."/>
            <person name="Di Bartolo G."/>
            <person name="Chain P."/>
            <person name="Malfatti S."/>
            <person name="Shin M."/>
            <person name="Vergez L."/>
            <person name="Schmutz J."/>
            <person name="Larimer F."/>
            <person name="Land M."/>
            <person name="Hauser L."/>
            <person name="Worsham P."/>
            <person name="Chu M."/>
            <person name="Bearden S."/>
            <person name="Garcia E."/>
            <person name="Richardson P."/>
        </authorList>
    </citation>
    <scope>NUCLEOTIDE SEQUENCE [LARGE SCALE GENOMIC DNA]</scope>
    <source>
        <strain>Pestoides F</strain>
    </source>
</reference>
<organism>
    <name type="scientific">Yersinia pestis (strain Pestoides F)</name>
    <dbReference type="NCBI Taxonomy" id="386656"/>
    <lineage>
        <taxon>Bacteria</taxon>
        <taxon>Pseudomonadati</taxon>
        <taxon>Pseudomonadota</taxon>
        <taxon>Gammaproteobacteria</taxon>
        <taxon>Enterobacterales</taxon>
        <taxon>Yersiniaceae</taxon>
        <taxon>Yersinia</taxon>
    </lineage>
</organism>
<accession>A4TQF9</accession>
<comment type="function">
    <text evidence="1">Acts as a chaperone.</text>
</comment>
<comment type="induction">
    <text evidence="1">By stress conditions e.g. heat shock.</text>
</comment>
<comment type="similarity">
    <text evidence="1">Belongs to the heat shock protein 70 family.</text>
</comment>
<sequence>MGKIIGIDLGTTNSCVAIMDGTKARVLENSEGDRTTPSIIAYTQDGETLVGQPAKRQAVTNPQNTLFAIKRLIGRRFQDEEAQRDKDIMPYKIIAADNGDAWLEVKGQKMAPPQISAEVLKKMKKTAEDYLGEPVTEAVITVPAYFNDAQRQATKDAGRIAGLEVKRIINEPTAAALAYGLDKEVGNRTIAVYDLGGGTFDISIIEIDEVDGEKTFEVLATNGDTHLGGEDFDSRLINYLVEEFKKDQGMDLRTDPLAMQRLKEAAEKAKIELSSAQQTDVNLPYITADGSGPKHMNIKVTRAKLESLVEDLVNRSIEPLKVALQDAGLSVSDIQDVILVGGQTRMPMVQKKVADFFGKEPRKDVNPDEAVAIGAAVQGGVLSGEVKDVLLLDVTPLSLGIETMGGVMTPLITKNTTIPTKHSQVFSTAEDNQSAVTIHVLQGERKRAQDNKSLGQFNLDGIQPAPRGMAQIEVTFDIDADGILHVSAKDKNTGREQKITIKASSGLNEEEIQKMVRDAEANAEADRKFEELVQTRNQADHLIHGTRKQLEEAGDKLPAEDKTAIEEAMKGLEAALKGEDKAEIEAKTQALVQVSGKLLEMAQQQQAAAGGDAGDTSAKKEDDVVDAEFEEVKDKK</sequence>
<gene>
    <name evidence="1" type="primary">dnaK</name>
    <name type="ordered locus">YPDSF_3163</name>
</gene>
<evidence type="ECO:0000255" key="1">
    <source>
        <dbReference type="HAMAP-Rule" id="MF_00332"/>
    </source>
</evidence>
<evidence type="ECO:0000256" key="2">
    <source>
        <dbReference type="SAM" id="MobiDB-lite"/>
    </source>
</evidence>
<keyword id="KW-0067">ATP-binding</keyword>
<keyword id="KW-0143">Chaperone</keyword>
<keyword id="KW-0547">Nucleotide-binding</keyword>
<keyword id="KW-0597">Phosphoprotein</keyword>
<keyword id="KW-0346">Stress response</keyword>
<proteinExistence type="inferred from homology"/>
<name>DNAK_YERPP</name>
<protein>
    <recommendedName>
        <fullName evidence="1">Chaperone protein DnaK</fullName>
    </recommendedName>
    <alternativeName>
        <fullName evidence="1">HSP70</fullName>
    </alternativeName>
    <alternativeName>
        <fullName evidence="1">Heat shock 70 kDa protein</fullName>
    </alternativeName>
    <alternativeName>
        <fullName evidence="1">Heat shock protein 70</fullName>
    </alternativeName>
</protein>